<name>Y2994_MYCTO</name>
<proteinExistence type="inferred from homology"/>
<organism>
    <name type="scientific">Mycobacterium tuberculosis (strain CDC 1551 / Oshkosh)</name>
    <dbReference type="NCBI Taxonomy" id="83331"/>
    <lineage>
        <taxon>Bacteria</taxon>
        <taxon>Bacillati</taxon>
        <taxon>Actinomycetota</taxon>
        <taxon>Actinomycetes</taxon>
        <taxon>Mycobacteriales</taxon>
        <taxon>Mycobacteriaceae</taxon>
        <taxon>Mycobacterium</taxon>
        <taxon>Mycobacterium tuberculosis complex</taxon>
    </lineage>
</organism>
<evidence type="ECO:0000255" key="1"/>
<evidence type="ECO:0000256" key="2">
    <source>
        <dbReference type="SAM" id="MobiDB-lite"/>
    </source>
</evidence>
<evidence type="ECO:0000305" key="3"/>
<protein>
    <recommendedName>
        <fullName>Uncharacterized MFS-type transporter MT3072</fullName>
    </recommendedName>
</protein>
<reference key="1">
    <citation type="journal article" date="2002" name="J. Bacteriol.">
        <title>Whole-genome comparison of Mycobacterium tuberculosis clinical and laboratory strains.</title>
        <authorList>
            <person name="Fleischmann R.D."/>
            <person name="Alland D."/>
            <person name="Eisen J.A."/>
            <person name="Carpenter L."/>
            <person name="White O."/>
            <person name="Peterson J.D."/>
            <person name="DeBoy R.T."/>
            <person name="Dodson R.J."/>
            <person name="Gwinn M.L."/>
            <person name="Haft D.H."/>
            <person name="Hickey E.K."/>
            <person name="Kolonay J.F."/>
            <person name="Nelson W.C."/>
            <person name="Umayam L.A."/>
            <person name="Ermolaeva M.D."/>
            <person name="Salzberg S.L."/>
            <person name="Delcher A."/>
            <person name="Utterback T.R."/>
            <person name="Weidman J.F."/>
            <person name="Khouri H.M."/>
            <person name="Gill J."/>
            <person name="Mikula A."/>
            <person name="Bishai W."/>
            <person name="Jacobs W.R. Jr."/>
            <person name="Venter J.C."/>
            <person name="Fraser C.M."/>
        </authorList>
    </citation>
    <scope>NUCLEOTIDE SEQUENCE [LARGE SCALE GENOMIC DNA]</scope>
    <source>
        <strain>CDC 1551 / Oshkosh</strain>
    </source>
</reference>
<keyword id="KW-1003">Cell membrane</keyword>
<keyword id="KW-0472">Membrane</keyword>
<keyword id="KW-1185">Reference proteome</keyword>
<keyword id="KW-0812">Transmembrane</keyword>
<keyword id="KW-1133">Transmembrane helix</keyword>
<keyword id="KW-0813">Transport</keyword>
<feature type="chain" id="PRO_0000427758" description="Uncharacterized MFS-type transporter MT3072">
    <location>
        <begin position="1"/>
        <end position="445"/>
    </location>
</feature>
<feature type="transmembrane region" description="Helical" evidence="1">
    <location>
        <begin position="16"/>
        <end position="36"/>
    </location>
</feature>
<feature type="transmembrane region" description="Helical" evidence="1">
    <location>
        <begin position="52"/>
        <end position="72"/>
    </location>
</feature>
<feature type="transmembrane region" description="Helical" evidence="1">
    <location>
        <begin position="98"/>
        <end position="118"/>
    </location>
</feature>
<feature type="transmembrane region" description="Helical" evidence="1">
    <location>
        <begin position="168"/>
        <end position="188"/>
    </location>
</feature>
<feature type="transmembrane region" description="Helical" evidence="1">
    <location>
        <begin position="219"/>
        <end position="239"/>
    </location>
</feature>
<feature type="transmembrane region" description="Helical" evidence="1">
    <location>
        <begin position="243"/>
        <end position="263"/>
    </location>
</feature>
<feature type="transmembrane region" description="Helical" evidence="1">
    <location>
        <begin position="283"/>
        <end position="303"/>
    </location>
</feature>
<feature type="transmembrane region" description="Helical" evidence="1">
    <location>
        <begin position="366"/>
        <end position="386"/>
    </location>
</feature>
<feature type="region of interest" description="Disordered" evidence="2">
    <location>
        <begin position="417"/>
        <end position="445"/>
    </location>
</feature>
<comment type="subcellular location">
    <subcellularLocation>
        <location evidence="3">Cell membrane</location>
        <topology evidence="3">Multi-pass membrane protein</topology>
    </subcellularLocation>
</comment>
<comment type="similarity">
    <text evidence="3">Belongs to the major facilitator superfamily.</text>
</comment>
<accession>P9WJW6</accession>
<accession>L0TCU9</accession>
<accession>Q7ARU7</accession>
<accession>Q8VJ95</accession>
<dbReference type="EMBL" id="AE000516">
    <property type="protein sequence ID" value="AAK47401.1"/>
    <property type="molecule type" value="Genomic_DNA"/>
</dbReference>
<dbReference type="PIR" id="E70854">
    <property type="entry name" value="E70854"/>
</dbReference>
<dbReference type="SMR" id="P9WJW6"/>
<dbReference type="KEGG" id="mtc:MT3072"/>
<dbReference type="HOGENOM" id="CLU_001265_58_1_11"/>
<dbReference type="Proteomes" id="UP000001020">
    <property type="component" value="Chromosome"/>
</dbReference>
<dbReference type="GO" id="GO:0005886">
    <property type="term" value="C:plasma membrane"/>
    <property type="evidence" value="ECO:0007669"/>
    <property type="project" value="UniProtKB-SubCell"/>
</dbReference>
<dbReference type="GO" id="GO:0022857">
    <property type="term" value="F:transmembrane transporter activity"/>
    <property type="evidence" value="ECO:0007669"/>
    <property type="project" value="InterPro"/>
</dbReference>
<dbReference type="CDD" id="cd17475">
    <property type="entry name" value="MFS_MT3072_like"/>
    <property type="match status" value="1"/>
</dbReference>
<dbReference type="FunFam" id="1.20.1250.20:FF:000584">
    <property type="entry name" value="Putative integral membrane protein"/>
    <property type="match status" value="1"/>
</dbReference>
<dbReference type="Gene3D" id="1.20.1250.20">
    <property type="entry name" value="MFS general substrate transporter like domains"/>
    <property type="match status" value="2"/>
</dbReference>
<dbReference type="InterPro" id="IPR011701">
    <property type="entry name" value="MFS"/>
</dbReference>
<dbReference type="InterPro" id="IPR052952">
    <property type="entry name" value="MFS-Transporter"/>
</dbReference>
<dbReference type="InterPro" id="IPR020846">
    <property type="entry name" value="MFS_dom"/>
</dbReference>
<dbReference type="InterPro" id="IPR036259">
    <property type="entry name" value="MFS_trans_sf"/>
</dbReference>
<dbReference type="PANTHER" id="PTHR23527">
    <property type="entry name" value="BLL3282 PROTEIN"/>
    <property type="match status" value="1"/>
</dbReference>
<dbReference type="PANTHER" id="PTHR23527:SF1">
    <property type="entry name" value="BLL3282 PROTEIN"/>
    <property type="match status" value="1"/>
</dbReference>
<dbReference type="Pfam" id="PF07690">
    <property type="entry name" value="MFS_1"/>
    <property type="match status" value="1"/>
</dbReference>
<dbReference type="SUPFAM" id="SSF103473">
    <property type="entry name" value="MFS general substrate transporter"/>
    <property type="match status" value="1"/>
</dbReference>
<dbReference type="PROSITE" id="PS50850">
    <property type="entry name" value="MFS"/>
    <property type="match status" value="1"/>
</dbReference>
<gene>
    <name type="ordered locus">MT3072</name>
</gene>
<sequence>MSRDPTGVGARWAIMIVSLGVTASSFLFINGVAFLIPRLENARGTPLSHAGLLASMPSWGLVVTMFAWGYLLDHVGERMVMAVGSALTAAAAYAAASVHSLLWIGVFLFLGGMAAGGCNSAGGRLVSGWFPPQQRGLAMGIRQTAQPLGIASGALVIPELAERGVHAGLMFPAVVCTLAAVASVLGIVDPPRKSRTKASEQELASPYRGSSILWRIHAASALLMMPQTVTVTFMLVWLINHHGWSVAQAGVLVTISQLLGALGRVAVGRWSDHVGSRMRPVRLIAAAAAATLFLLAAVDNEGSRYDVLLMIAISVIAVLDNGLEAAAITEYAGPYWSGRALGIQNTTQRLMAAAGPPLFGSLITTAAYPTAWALCGVFPLAAVPLVPVRLLPPGLETRARRQSVRRHRWWQAVRCHAWPNGPRRPGPPGQPRRVRQGGTAITPPT</sequence>